<sequence>MARGYGATVSLVLLGLGLALAVIVLAVVLSRHQAPCGPQAFAHAAVAADSKVCSDIGRAILQQQGSPVDATIAALVCTSVVNPQSMGLGGGVIFTIYNVTTGKVEVINARETVPASHAPSLLDQCAQALPLGTGAQWIGVPGELRGYAEAHRRHGRLPWAQLFQPTIALLRGGHVVAPVLSRFLHNSILRPSLQASTLRQLFFNGTEPLRPQDPLPWPALATTLETVATEGVEVFYTGRLGQMLVEDIAKEGSQLTLQDLAKFQPEVVDALEVPLGDYTLYSPPPPAGGAILSFILNVLRGFNFSTESMARPEGRVNVYHHLVETLKFAKGQRWRLGDPRSHPKLQNASRDLLGETLAQLIRQQIDGRGDHQLSHYSLAEAWGHGTGTSHVSVLGEDGSAVAATSTINTPFGAMVYSPRTGIILNNELLDLCERCPRGSGTTPSPVSGDRVGGAPGRCWPPVPGERSPSSMVPSILINKAQGSKLVIGGAGGELIISAVAQAIMSKLWLGFDLRAAIAAPILHVNSKGCVEYEPNFSQEVQRGLQDRGQNQTQRPFFLNVVQAVSQEGACVYAVSDLRKSGEAAGY</sequence>
<feature type="chain" id="PRO_0000011072" description="Glutathione hydrolase 5 heavy chain" evidence="1">
    <location>
        <begin position="1"/>
        <end position="387"/>
    </location>
</feature>
<feature type="chain" id="PRO_0000011073" description="Glutathione hydrolase 5 light chain" evidence="1">
    <location>
        <begin position="388"/>
        <end position="586"/>
    </location>
</feature>
<feature type="topological domain" description="Cytoplasmic" evidence="2">
    <location>
        <begin position="1"/>
        <end position="8"/>
    </location>
</feature>
<feature type="transmembrane region" description="Helical; Signal-anchor for type II membrane protein" evidence="2">
    <location>
        <begin position="9"/>
        <end position="29"/>
    </location>
</feature>
<feature type="topological domain" description="Extracellular" evidence="2">
    <location>
        <begin position="30"/>
        <end position="586"/>
    </location>
</feature>
<feature type="active site" description="Nucleophile" evidence="1">
    <location>
        <position position="388"/>
    </location>
</feature>
<feature type="binding site" evidence="1">
    <location>
        <position position="110"/>
    </location>
    <ligand>
        <name>L-glutamate</name>
        <dbReference type="ChEBI" id="CHEBI:29985"/>
    </ligand>
</feature>
<feature type="binding site" evidence="1">
    <location>
        <position position="406"/>
    </location>
    <ligand>
        <name>L-glutamate</name>
        <dbReference type="ChEBI" id="CHEBI:29985"/>
    </ligand>
</feature>
<feature type="binding site" evidence="1">
    <location>
        <position position="427"/>
    </location>
    <ligand>
        <name>L-glutamate</name>
        <dbReference type="ChEBI" id="CHEBI:29985"/>
    </ligand>
</feature>
<feature type="binding site" evidence="1">
    <location>
        <begin position="469"/>
        <end position="470"/>
    </location>
    <ligand>
        <name>L-glutamate</name>
        <dbReference type="ChEBI" id="CHEBI:29985"/>
    </ligand>
</feature>
<feature type="glycosylation site" description="N-linked (GlcNAc...) asparagine" evidence="3">
    <location>
        <position position="98"/>
    </location>
</feature>
<feature type="glycosylation site" description="N-linked (GlcNAc...) asparagine" evidence="3">
    <location>
        <position position="204"/>
    </location>
</feature>
<feature type="glycosylation site" description="N-linked (GlcNAc...) asparagine" evidence="3">
    <location>
        <position position="303"/>
    </location>
</feature>
<feature type="glycosylation site" description="N-linked (GlcNAc...) asparagine" evidence="3">
    <location>
        <position position="347"/>
    </location>
</feature>
<feature type="glycosylation site" description="N-linked (GlcNAc...) asparagine" evidence="3">
    <location>
        <position position="535"/>
    </location>
</feature>
<feature type="glycosylation site" description="N-linked (GlcNAc...) asparagine" evidence="6">
    <location>
        <position position="550"/>
    </location>
</feature>
<feature type="splice variant" id="VSP_008146" description="In isoform 2." evidence="11">
    <location>
        <begin position="101"/>
        <end position="132"/>
    </location>
</feature>
<feature type="splice variant" id="VSP_043470" description="In isoform 3." evidence="9">
    <original>P</original>
    <variation>PA</variation>
    <location>
        <position position="445"/>
    </location>
</feature>
<feature type="sequence variant" id="VAR_028006" description="In dbSNP:rs5760274.">
    <original>L</original>
    <variation>I</variation>
    <location>
        <position position="11"/>
    </location>
</feature>
<feature type="sequence variant" id="VAR_028007" description="In dbSNP:rs2275984." evidence="4 5">
    <original>K</original>
    <variation>R</variation>
    <location>
        <position position="330"/>
    </location>
</feature>
<feature type="sequence variant" id="VAR_028008" description="In dbSNP:rs6004105.">
    <original>Q</original>
    <variation>H</variation>
    <location>
        <position position="332"/>
    </location>
</feature>
<feature type="sequence variant" id="VAR_024455" description="In dbSNP:rs7288201.">
    <original>I</original>
    <variation>V</variation>
    <location>
        <position position="475"/>
    </location>
</feature>
<feature type="sequence conflict" description="In Ref. 5; CAB55910." evidence="13" ref="5">
    <original>N</original>
    <variation>Y</variation>
    <location>
        <position position="408"/>
    </location>
</feature>
<feature type="sequence conflict" description="In Ref. 1; AAA58503." evidence="13" ref="1">
    <original>R</original>
    <variation>W</variation>
    <location>
        <position position="437"/>
    </location>
</feature>
<protein>
    <recommendedName>
        <fullName>Glutathione hydrolase 5 proenzyme</fullName>
        <ecNumber evidence="5 7 8">3.4.19.13</ecNumber>
    </recommendedName>
    <alternativeName>
        <fullName evidence="10">Gamma-glutamyl transpeptidase-related enzyme</fullName>
        <shortName evidence="10">GGT-rel</shortName>
    </alternativeName>
    <alternativeName>
        <fullName>Gamma-glutamyltransferase 5</fullName>
        <shortName>GGT 5</shortName>
        <ecNumber evidence="14">2.3.2.2</ecNumber>
    </alternativeName>
    <alternativeName>
        <fullName evidence="10">Gamma-glutamyltransferase-like activity 1</fullName>
    </alternativeName>
    <alternativeName>
        <fullName>Gamma-glutamyltranspeptidase 5</fullName>
    </alternativeName>
    <alternativeName>
        <fullName>Leukotriene-C4 hydrolase</fullName>
        <ecNumber evidence="7">3.4.19.14</ecNumber>
    </alternativeName>
    <component>
        <recommendedName>
            <fullName>Glutathione hydrolase 5 heavy chain</fullName>
        </recommendedName>
    </component>
    <component>
        <recommendedName>
            <fullName>Glutathione hydrolase 5 light chain</fullName>
        </recommendedName>
    </component>
</protein>
<accession>P36269</accession>
<accession>Q53XM9</accession>
<accession>Q6GMP0</accession>
<accession>Q96FC1</accession>
<accession>Q9UFM5</accession>
<organism>
    <name type="scientific">Homo sapiens</name>
    <name type="common">Human</name>
    <dbReference type="NCBI Taxonomy" id="9606"/>
    <lineage>
        <taxon>Eukaryota</taxon>
        <taxon>Metazoa</taxon>
        <taxon>Chordata</taxon>
        <taxon>Craniata</taxon>
        <taxon>Vertebrata</taxon>
        <taxon>Euteleostomi</taxon>
        <taxon>Mammalia</taxon>
        <taxon>Eutheria</taxon>
        <taxon>Euarchontoglires</taxon>
        <taxon>Primates</taxon>
        <taxon>Haplorrhini</taxon>
        <taxon>Catarrhini</taxon>
        <taxon>Hominidae</taxon>
        <taxon>Homo</taxon>
    </lineage>
</organism>
<dbReference type="EC" id="3.4.19.13" evidence="5 7 8"/>
<dbReference type="EC" id="2.3.2.2" evidence="14"/>
<dbReference type="EC" id="3.4.19.14" evidence="7"/>
<dbReference type="EMBL" id="M64099">
    <property type="protein sequence ID" value="AAA58503.1"/>
    <property type="molecule type" value="mRNA"/>
</dbReference>
<dbReference type="EMBL" id="AL117414">
    <property type="protein sequence ID" value="CAB55910.1"/>
    <property type="status" value="ALT_FRAME"/>
    <property type="molecule type" value="mRNA"/>
</dbReference>
<dbReference type="EMBL" id="BT009808">
    <property type="protein sequence ID" value="AAP88810.1"/>
    <property type="molecule type" value="mRNA"/>
</dbReference>
<dbReference type="EMBL" id="CT841518">
    <property type="protein sequence ID" value="CAJ86448.1"/>
    <property type="molecule type" value="mRNA"/>
</dbReference>
<dbReference type="EMBL" id="AK292006">
    <property type="protein sequence ID" value="BAF84695.1"/>
    <property type="molecule type" value="mRNA"/>
</dbReference>
<dbReference type="EMBL" id="AP000353">
    <property type="status" value="NOT_ANNOTATED_CDS"/>
    <property type="molecule type" value="Genomic_DNA"/>
</dbReference>
<dbReference type="EMBL" id="AP000354">
    <property type="status" value="NOT_ANNOTATED_CDS"/>
    <property type="molecule type" value="Genomic_DNA"/>
</dbReference>
<dbReference type="EMBL" id="CH471095">
    <property type="protein sequence ID" value="EAW59643.1"/>
    <property type="molecule type" value="Genomic_DNA"/>
</dbReference>
<dbReference type="EMBL" id="BC011362">
    <property type="protein sequence ID" value="AAH11362.1"/>
    <property type="molecule type" value="mRNA"/>
</dbReference>
<dbReference type="EMBL" id="BC073999">
    <property type="protein sequence ID" value="AAH73999.1"/>
    <property type="molecule type" value="mRNA"/>
</dbReference>
<dbReference type="CCDS" id="CCDS13825.1">
    <molecule id="P36269-1"/>
</dbReference>
<dbReference type="CCDS" id="CCDS42989.1">
    <molecule id="P36269-2"/>
</dbReference>
<dbReference type="CCDS" id="CCDS42990.1">
    <molecule id="P36269-3"/>
</dbReference>
<dbReference type="PIR" id="A41125">
    <property type="entry name" value="A41125"/>
</dbReference>
<dbReference type="PIR" id="T17220">
    <property type="entry name" value="T17220"/>
</dbReference>
<dbReference type="RefSeq" id="NP_001093251.1">
    <molecule id="P36269-3"/>
    <property type="nucleotide sequence ID" value="NM_001099781.2"/>
</dbReference>
<dbReference type="RefSeq" id="NP_001093252.1">
    <molecule id="P36269-2"/>
    <property type="nucleotide sequence ID" value="NM_001099782.2"/>
</dbReference>
<dbReference type="RefSeq" id="NP_001289393.1">
    <property type="nucleotide sequence ID" value="NM_001302464.1"/>
</dbReference>
<dbReference type="RefSeq" id="NP_001289394.1">
    <property type="nucleotide sequence ID" value="NM_001302465.1"/>
</dbReference>
<dbReference type="RefSeq" id="NP_004112.2">
    <molecule id="P36269-1"/>
    <property type="nucleotide sequence ID" value="NM_004121.5"/>
</dbReference>
<dbReference type="SMR" id="P36269"/>
<dbReference type="BioGRID" id="108954">
    <property type="interactions" value="71"/>
</dbReference>
<dbReference type="FunCoup" id="P36269">
    <property type="interactions" value="204"/>
</dbReference>
<dbReference type="IntAct" id="P36269">
    <property type="interactions" value="5"/>
</dbReference>
<dbReference type="STRING" id="9606.ENSP00000381340"/>
<dbReference type="SwissLipids" id="SLP:000001455"/>
<dbReference type="MEROPS" id="T03.002"/>
<dbReference type="GlyCosmos" id="P36269">
    <property type="glycosylation" value="8 sites, 4 glycans"/>
</dbReference>
<dbReference type="GlyGen" id="P36269">
    <property type="glycosylation" value="8 sites, 15 N-linked glycans (1 site), 4 O-linked glycans (2 sites)"/>
</dbReference>
<dbReference type="iPTMnet" id="P36269"/>
<dbReference type="PhosphoSitePlus" id="P36269"/>
<dbReference type="SwissPalm" id="P36269"/>
<dbReference type="BioMuta" id="GGT5"/>
<dbReference type="DMDM" id="116242493"/>
<dbReference type="MassIVE" id="P36269"/>
<dbReference type="PaxDb" id="9606-ENSP00000381340"/>
<dbReference type="PeptideAtlas" id="P36269"/>
<dbReference type="ProteomicsDB" id="55177">
    <molecule id="P36269-1"/>
</dbReference>
<dbReference type="ProteomicsDB" id="55178">
    <molecule id="P36269-2"/>
</dbReference>
<dbReference type="ProteomicsDB" id="55179">
    <molecule id="P36269-3"/>
</dbReference>
<dbReference type="Antibodypedia" id="285">
    <property type="antibodies" value="128 antibodies from 28 providers"/>
</dbReference>
<dbReference type="DNASU" id="2687"/>
<dbReference type="Ensembl" id="ENST00000263112.11">
    <molecule id="P36269-2"/>
    <property type="protein sequence ID" value="ENSP00000263112.7"/>
    <property type="gene ID" value="ENSG00000099998.19"/>
</dbReference>
<dbReference type="Ensembl" id="ENST00000327365.10">
    <molecule id="P36269-1"/>
    <property type="protein sequence ID" value="ENSP00000330080.4"/>
    <property type="gene ID" value="ENSG00000099998.19"/>
</dbReference>
<dbReference type="Ensembl" id="ENST00000398292.3">
    <molecule id="P36269-3"/>
    <property type="protein sequence ID" value="ENSP00000381340.3"/>
    <property type="gene ID" value="ENSG00000099998.19"/>
</dbReference>
<dbReference type="GeneID" id="2687"/>
<dbReference type="KEGG" id="hsa:2687"/>
<dbReference type="MANE-Select" id="ENST00000327365.10">
    <property type="protein sequence ID" value="ENSP00000330080.4"/>
    <property type="RefSeq nucleotide sequence ID" value="NM_004121.5"/>
    <property type="RefSeq protein sequence ID" value="NP_004112.2"/>
</dbReference>
<dbReference type="UCSC" id="uc002zzo.4">
    <molecule id="P36269-1"/>
    <property type="organism name" value="human"/>
</dbReference>
<dbReference type="AGR" id="HGNC:4260"/>
<dbReference type="CTD" id="2687"/>
<dbReference type="DisGeNET" id="2687"/>
<dbReference type="GeneCards" id="GGT5"/>
<dbReference type="HGNC" id="HGNC:4260">
    <property type="gene designation" value="GGT5"/>
</dbReference>
<dbReference type="HPA" id="ENSG00000099998">
    <property type="expression patterns" value="Low tissue specificity"/>
</dbReference>
<dbReference type="MIM" id="137168">
    <property type="type" value="gene"/>
</dbReference>
<dbReference type="neXtProt" id="NX_P36269"/>
<dbReference type="OpenTargets" id="ENSG00000099998"/>
<dbReference type="PharmGKB" id="PA162389442"/>
<dbReference type="VEuPathDB" id="HostDB:ENSG00000099998"/>
<dbReference type="eggNOG" id="KOG2410">
    <property type="taxonomic scope" value="Eukaryota"/>
</dbReference>
<dbReference type="GeneTree" id="ENSGT00940000155794"/>
<dbReference type="HOGENOM" id="CLU_014813_4_1_1"/>
<dbReference type="InParanoid" id="P36269"/>
<dbReference type="OMA" id="ICGMGPP"/>
<dbReference type="OrthoDB" id="1081007at2759"/>
<dbReference type="PAN-GO" id="P36269">
    <property type="GO annotations" value="6 GO annotations based on evolutionary models"/>
</dbReference>
<dbReference type="PhylomeDB" id="P36269"/>
<dbReference type="TreeFam" id="TF313608"/>
<dbReference type="BioCyc" id="MetaCyc:HS01949-MONOMER"/>
<dbReference type="BRENDA" id="2.3.2.2">
    <property type="organism ID" value="2681"/>
</dbReference>
<dbReference type="BRENDA" id="3.4.19.13">
    <property type="organism ID" value="2681"/>
</dbReference>
<dbReference type="PathwayCommons" id="P36269"/>
<dbReference type="Reactome" id="R-HSA-174403">
    <property type="pathway name" value="Glutathione synthesis and recycling"/>
</dbReference>
<dbReference type="Reactome" id="R-HSA-2142691">
    <property type="pathway name" value="Synthesis of Leukotrienes (LT) and Eoxins (EX)"/>
</dbReference>
<dbReference type="Reactome" id="R-HSA-5423646">
    <property type="pathway name" value="Aflatoxin activation and detoxification"/>
</dbReference>
<dbReference type="Reactome" id="R-HSA-9664535">
    <property type="pathway name" value="LTC4-CYSLTR mediated IL4 production"/>
</dbReference>
<dbReference type="Reactome" id="R-HSA-9753281">
    <property type="pathway name" value="Paracetamol ADME"/>
</dbReference>
<dbReference type="SignaLink" id="P36269"/>
<dbReference type="UniPathway" id="UPA00204"/>
<dbReference type="UniPathway" id="UPA00880"/>
<dbReference type="BioGRID-ORCS" id="2687">
    <property type="hits" value="22 hits in 1156 CRISPR screens"/>
</dbReference>
<dbReference type="ChiTaRS" id="GGT5">
    <property type="organism name" value="human"/>
</dbReference>
<dbReference type="GeneWiki" id="GGTLA1"/>
<dbReference type="GenomeRNAi" id="2687"/>
<dbReference type="Pharos" id="P36269">
    <property type="development level" value="Tbio"/>
</dbReference>
<dbReference type="PRO" id="PR:P36269"/>
<dbReference type="Proteomes" id="UP000005640">
    <property type="component" value="Chromosome 22"/>
</dbReference>
<dbReference type="RNAct" id="P36269">
    <property type="molecule type" value="protein"/>
</dbReference>
<dbReference type="Bgee" id="ENSG00000099998">
    <property type="expression patterns" value="Expressed in right lobe of thyroid gland and 129 other cell types or tissues"/>
</dbReference>
<dbReference type="ExpressionAtlas" id="P36269">
    <property type="expression patterns" value="baseline and differential"/>
</dbReference>
<dbReference type="GO" id="GO:0005886">
    <property type="term" value="C:plasma membrane"/>
    <property type="evidence" value="ECO:0000314"/>
    <property type="project" value="UniProtKB"/>
</dbReference>
<dbReference type="GO" id="GO:0036374">
    <property type="term" value="F:glutathione hydrolase activity"/>
    <property type="evidence" value="ECO:0000314"/>
    <property type="project" value="UniProtKB"/>
</dbReference>
<dbReference type="GO" id="GO:0103068">
    <property type="term" value="F:leukotriene C4 gamma-glutamyl transferase activity"/>
    <property type="evidence" value="ECO:0007669"/>
    <property type="project" value="UniProtKB-EC"/>
</dbReference>
<dbReference type="GO" id="GO:0002951">
    <property type="term" value="F:leukotriene-C(4) hydrolase"/>
    <property type="evidence" value="ECO:0000314"/>
    <property type="project" value="UniProtKB"/>
</dbReference>
<dbReference type="GO" id="GO:0000048">
    <property type="term" value="F:peptidyltransferase activity"/>
    <property type="evidence" value="ECO:0000314"/>
    <property type="project" value="BHF-UCL"/>
</dbReference>
<dbReference type="GO" id="GO:0006520">
    <property type="term" value="P:amino acid metabolic process"/>
    <property type="evidence" value="ECO:0000314"/>
    <property type="project" value="UniProtKB"/>
</dbReference>
<dbReference type="GO" id="GO:0006631">
    <property type="term" value="P:fatty acid metabolic process"/>
    <property type="evidence" value="ECO:0000314"/>
    <property type="project" value="BHF-UCL"/>
</dbReference>
<dbReference type="GO" id="GO:0006750">
    <property type="term" value="P:glutathione biosynthetic process"/>
    <property type="evidence" value="ECO:0007669"/>
    <property type="project" value="UniProtKB-KW"/>
</dbReference>
<dbReference type="GO" id="GO:0006751">
    <property type="term" value="P:glutathione catabolic process"/>
    <property type="evidence" value="ECO:0000314"/>
    <property type="project" value="UniProtKB"/>
</dbReference>
<dbReference type="GO" id="GO:0006954">
    <property type="term" value="P:inflammatory response"/>
    <property type="evidence" value="ECO:0000318"/>
    <property type="project" value="GO_Central"/>
</dbReference>
<dbReference type="GO" id="GO:1901750">
    <property type="term" value="P:leukotriene D4 biosynthetic process"/>
    <property type="evidence" value="ECO:0000314"/>
    <property type="project" value="UniProtKB"/>
</dbReference>
<dbReference type="GO" id="GO:0006508">
    <property type="term" value="P:proteolysis"/>
    <property type="evidence" value="ECO:0000314"/>
    <property type="project" value="UniProtKB"/>
</dbReference>
<dbReference type="FunFam" id="1.10.246.130:FF:000015">
    <property type="entry name" value="Gamma-glutamyltransferase 5"/>
    <property type="match status" value="1"/>
</dbReference>
<dbReference type="FunFam" id="3.60.20.40:FF:000005">
    <property type="entry name" value="gamma-glutamyltransferase 5 isoform X3"/>
    <property type="match status" value="1"/>
</dbReference>
<dbReference type="Gene3D" id="1.10.246.130">
    <property type="match status" value="1"/>
</dbReference>
<dbReference type="Gene3D" id="3.60.20.40">
    <property type="match status" value="1"/>
</dbReference>
<dbReference type="InterPro" id="IPR055262">
    <property type="entry name" value="GGT_CS"/>
</dbReference>
<dbReference type="InterPro" id="IPR043138">
    <property type="entry name" value="GGT_lsub_C"/>
</dbReference>
<dbReference type="InterPro" id="IPR000101">
    <property type="entry name" value="GGT_peptidase"/>
</dbReference>
<dbReference type="InterPro" id="IPR043137">
    <property type="entry name" value="GGT_ssub"/>
</dbReference>
<dbReference type="InterPro" id="IPR029055">
    <property type="entry name" value="Ntn_hydrolases_N"/>
</dbReference>
<dbReference type="PANTHER" id="PTHR45027:SF2">
    <property type="entry name" value="GAMMA-GLUTAMYLTRANSFERASE 5"/>
    <property type="match status" value="1"/>
</dbReference>
<dbReference type="PANTHER" id="PTHR45027">
    <property type="entry name" value="PUTATIVE GLUTATHIONE HYDROLASE LIGHT CHAIN"/>
    <property type="match status" value="1"/>
</dbReference>
<dbReference type="Pfam" id="PF01019">
    <property type="entry name" value="G_glu_transpept"/>
    <property type="match status" value="1"/>
</dbReference>
<dbReference type="PRINTS" id="PR01210">
    <property type="entry name" value="GGTRANSPTASE"/>
</dbReference>
<dbReference type="SUPFAM" id="SSF56235">
    <property type="entry name" value="N-terminal nucleophile aminohydrolases (Ntn hydrolases)"/>
    <property type="match status" value="1"/>
</dbReference>
<dbReference type="PROSITE" id="PS00462">
    <property type="entry name" value="G_GLU_TRANSPEPTIDASE"/>
    <property type="match status" value="1"/>
</dbReference>
<reference key="1">
    <citation type="journal article" date="1991" name="Proc. Natl. Acad. Sci. U.S.A.">
        <title>Identification of a human gamma-glutamyl cleaving enzyme related to, but distinct from, gamma-glutamyl transpeptidase.</title>
        <authorList>
            <person name="Heisterkamp N."/>
            <person name="Rajpert-De Meyts E."/>
            <person name="Uribe L."/>
            <person name="Forman H.J."/>
            <person name="Groffen J."/>
        </authorList>
    </citation>
    <scope>NUCLEOTIDE SEQUENCE [MRNA] (ISOFORM 1)</scope>
    <scope>VARIANT ARG-330</scope>
    <scope>CATALYTIC ACTIVITY</scope>
    <scope>FUNCTION</scope>
    <source>
        <tissue>Placenta</tissue>
    </source>
</reference>
<reference key="2">
    <citation type="submission" date="2003-08" db="EMBL/GenBank/DDBJ databases">
        <title>Cloning of human full-length CDSs in BD Creator(TM) system donor vector.</title>
        <authorList>
            <person name="Kalnine N."/>
            <person name="Chen X."/>
            <person name="Rolfs A."/>
            <person name="Halleck A."/>
            <person name="Hines L."/>
            <person name="Eisenstein S."/>
            <person name="Koundinya M."/>
            <person name="Raphael J."/>
            <person name="Moreira D."/>
            <person name="Kelley T."/>
            <person name="LaBaer J."/>
            <person name="Lin Y."/>
            <person name="Phelan M."/>
            <person name="Farmer A."/>
        </authorList>
    </citation>
    <scope>NUCLEOTIDE SEQUENCE [LARGE SCALE MRNA] (ISOFORM 1)</scope>
</reference>
<reference key="3">
    <citation type="journal article" date="2004" name="Genome Biol.">
        <title>A genome annotation-driven approach to cloning the human ORFeome.</title>
        <authorList>
            <person name="Collins J.E."/>
            <person name="Wright C.L."/>
            <person name="Edwards C.A."/>
            <person name="Davis M.P."/>
            <person name="Grinham J.A."/>
            <person name="Cole C.G."/>
            <person name="Goward M.E."/>
            <person name="Aguado B."/>
            <person name="Mallya M."/>
            <person name="Mokrab Y."/>
            <person name="Huckle E.J."/>
            <person name="Beare D.M."/>
            <person name="Dunham I."/>
        </authorList>
    </citation>
    <scope>NUCLEOTIDE SEQUENCE [LARGE SCALE MRNA] (ISOFORM 1)</scope>
</reference>
<reference key="4">
    <citation type="journal article" date="2004" name="Nat. Genet.">
        <title>Complete sequencing and characterization of 21,243 full-length human cDNAs.</title>
        <authorList>
            <person name="Ota T."/>
            <person name="Suzuki Y."/>
            <person name="Nishikawa T."/>
            <person name="Otsuki T."/>
            <person name="Sugiyama T."/>
            <person name="Irie R."/>
            <person name="Wakamatsu A."/>
            <person name="Hayashi K."/>
            <person name="Sato H."/>
            <person name="Nagai K."/>
            <person name="Kimura K."/>
            <person name="Makita H."/>
            <person name="Sekine M."/>
            <person name="Obayashi M."/>
            <person name="Nishi T."/>
            <person name="Shibahara T."/>
            <person name="Tanaka T."/>
            <person name="Ishii S."/>
            <person name="Yamamoto J."/>
            <person name="Saito K."/>
            <person name="Kawai Y."/>
            <person name="Isono Y."/>
            <person name="Nakamura Y."/>
            <person name="Nagahari K."/>
            <person name="Murakami K."/>
            <person name="Yasuda T."/>
            <person name="Iwayanagi T."/>
            <person name="Wagatsuma M."/>
            <person name="Shiratori A."/>
            <person name="Sudo H."/>
            <person name="Hosoiri T."/>
            <person name="Kaku Y."/>
            <person name="Kodaira H."/>
            <person name="Kondo H."/>
            <person name="Sugawara M."/>
            <person name="Takahashi M."/>
            <person name="Kanda K."/>
            <person name="Yokoi T."/>
            <person name="Furuya T."/>
            <person name="Kikkawa E."/>
            <person name="Omura Y."/>
            <person name="Abe K."/>
            <person name="Kamihara K."/>
            <person name="Katsuta N."/>
            <person name="Sato K."/>
            <person name="Tanikawa M."/>
            <person name="Yamazaki M."/>
            <person name="Ninomiya K."/>
            <person name="Ishibashi T."/>
            <person name="Yamashita H."/>
            <person name="Murakawa K."/>
            <person name="Fujimori K."/>
            <person name="Tanai H."/>
            <person name="Kimata M."/>
            <person name="Watanabe M."/>
            <person name="Hiraoka S."/>
            <person name="Chiba Y."/>
            <person name="Ishida S."/>
            <person name="Ono Y."/>
            <person name="Takiguchi S."/>
            <person name="Watanabe S."/>
            <person name="Yosida M."/>
            <person name="Hotuta T."/>
            <person name="Kusano J."/>
            <person name="Kanehori K."/>
            <person name="Takahashi-Fujii A."/>
            <person name="Hara H."/>
            <person name="Tanase T.-O."/>
            <person name="Nomura Y."/>
            <person name="Togiya S."/>
            <person name="Komai F."/>
            <person name="Hara R."/>
            <person name="Takeuchi K."/>
            <person name="Arita M."/>
            <person name="Imose N."/>
            <person name="Musashino K."/>
            <person name="Yuuki H."/>
            <person name="Oshima A."/>
            <person name="Sasaki N."/>
            <person name="Aotsuka S."/>
            <person name="Yoshikawa Y."/>
            <person name="Matsunawa H."/>
            <person name="Ichihara T."/>
            <person name="Shiohata N."/>
            <person name="Sano S."/>
            <person name="Moriya S."/>
            <person name="Momiyama H."/>
            <person name="Satoh N."/>
            <person name="Takami S."/>
            <person name="Terashima Y."/>
            <person name="Suzuki O."/>
            <person name="Nakagawa S."/>
            <person name="Senoh A."/>
            <person name="Mizoguchi H."/>
            <person name="Goto Y."/>
            <person name="Shimizu F."/>
            <person name="Wakebe H."/>
            <person name="Hishigaki H."/>
            <person name="Watanabe T."/>
            <person name="Sugiyama A."/>
            <person name="Takemoto M."/>
            <person name="Kawakami B."/>
            <person name="Yamazaki M."/>
            <person name="Watanabe K."/>
            <person name="Kumagai A."/>
            <person name="Itakura S."/>
            <person name="Fukuzumi Y."/>
            <person name="Fujimori Y."/>
            <person name="Komiyama M."/>
            <person name="Tashiro H."/>
            <person name="Tanigami A."/>
            <person name="Fujiwara T."/>
            <person name="Ono T."/>
            <person name="Yamada K."/>
            <person name="Fujii Y."/>
            <person name="Ozaki K."/>
            <person name="Hirao M."/>
            <person name="Ohmori Y."/>
            <person name="Kawabata A."/>
            <person name="Hikiji T."/>
            <person name="Kobatake N."/>
            <person name="Inagaki H."/>
            <person name="Ikema Y."/>
            <person name="Okamoto S."/>
            <person name="Okitani R."/>
            <person name="Kawakami T."/>
            <person name="Noguchi S."/>
            <person name="Itoh T."/>
            <person name="Shigeta K."/>
            <person name="Senba T."/>
            <person name="Matsumura K."/>
            <person name="Nakajima Y."/>
            <person name="Mizuno T."/>
            <person name="Morinaga M."/>
            <person name="Sasaki M."/>
            <person name="Togashi T."/>
            <person name="Oyama M."/>
            <person name="Hata H."/>
            <person name="Watanabe M."/>
            <person name="Komatsu T."/>
            <person name="Mizushima-Sugano J."/>
            <person name="Satoh T."/>
            <person name="Shirai Y."/>
            <person name="Takahashi Y."/>
            <person name="Nakagawa K."/>
            <person name="Okumura K."/>
            <person name="Nagase T."/>
            <person name="Nomura N."/>
            <person name="Kikuchi H."/>
            <person name="Masuho Y."/>
            <person name="Yamashita R."/>
            <person name="Nakai K."/>
            <person name="Yada T."/>
            <person name="Nakamura Y."/>
            <person name="Ohara O."/>
            <person name="Isogai T."/>
            <person name="Sugano S."/>
        </authorList>
    </citation>
    <scope>NUCLEOTIDE SEQUENCE [LARGE SCALE MRNA] (ISOFORM 1)</scope>
    <source>
        <tissue>Small intestine</tissue>
    </source>
</reference>
<reference key="5">
    <citation type="journal article" date="2007" name="BMC Genomics">
        <title>The full-ORF clone resource of the German cDNA consortium.</title>
        <authorList>
            <person name="Bechtel S."/>
            <person name="Rosenfelder H."/>
            <person name="Duda A."/>
            <person name="Schmidt C.P."/>
            <person name="Ernst U."/>
            <person name="Wellenreuther R."/>
            <person name="Mehrle A."/>
            <person name="Schuster C."/>
            <person name="Bahr A."/>
            <person name="Bloecker H."/>
            <person name="Heubner D."/>
            <person name="Hoerlein A."/>
            <person name="Michel G."/>
            <person name="Wedler H."/>
            <person name="Koehrer K."/>
            <person name="Ottenwaelder B."/>
            <person name="Poustka A."/>
            <person name="Wiemann S."/>
            <person name="Schupp I."/>
        </authorList>
    </citation>
    <scope>NUCLEOTIDE SEQUENCE [LARGE SCALE MRNA] (ISOFORM 2)</scope>
    <source>
        <tissue>Fetal kidney</tissue>
    </source>
</reference>
<reference key="6">
    <citation type="journal article" date="1999" name="Nature">
        <title>The DNA sequence of human chromosome 22.</title>
        <authorList>
            <person name="Dunham I."/>
            <person name="Hunt A.R."/>
            <person name="Collins J.E."/>
            <person name="Bruskiewich R."/>
            <person name="Beare D.M."/>
            <person name="Clamp M."/>
            <person name="Smink L.J."/>
            <person name="Ainscough R."/>
            <person name="Almeida J.P."/>
            <person name="Babbage A.K."/>
            <person name="Bagguley C."/>
            <person name="Bailey J."/>
            <person name="Barlow K.F."/>
            <person name="Bates K.N."/>
            <person name="Beasley O.P."/>
            <person name="Bird C.P."/>
            <person name="Blakey S.E."/>
            <person name="Bridgeman A.M."/>
            <person name="Buck D."/>
            <person name="Burgess J."/>
            <person name="Burrill W.D."/>
            <person name="Burton J."/>
            <person name="Carder C."/>
            <person name="Carter N.P."/>
            <person name="Chen Y."/>
            <person name="Clark G."/>
            <person name="Clegg S.M."/>
            <person name="Cobley V.E."/>
            <person name="Cole C.G."/>
            <person name="Collier R.E."/>
            <person name="Connor R."/>
            <person name="Conroy D."/>
            <person name="Corby N.R."/>
            <person name="Coville G.J."/>
            <person name="Cox A.V."/>
            <person name="Davis J."/>
            <person name="Dawson E."/>
            <person name="Dhami P.D."/>
            <person name="Dockree C."/>
            <person name="Dodsworth S.J."/>
            <person name="Durbin R.M."/>
            <person name="Ellington A.G."/>
            <person name="Evans K.L."/>
            <person name="Fey J.M."/>
            <person name="Fleming K."/>
            <person name="French L."/>
            <person name="Garner A.A."/>
            <person name="Gilbert J.G.R."/>
            <person name="Goward M.E."/>
            <person name="Grafham D.V."/>
            <person name="Griffiths M.N.D."/>
            <person name="Hall C."/>
            <person name="Hall R.E."/>
            <person name="Hall-Tamlyn G."/>
            <person name="Heathcott R.W."/>
            <person name="Ho S."/>
            <person name="Holmes S."/>
            <person name="Hunt S.E."/>
            <person name="Jones M.C."/>
            <person name="Kershaw J."/>
            <person name="Kimberley A.M."/>
            <person name="King A."/>
            <person name="Laird G.K."/>
            <person name="Langford C.F."/>
            <person name="Leversha M.A."/>
            <person name="Lloyd C."/>
            <person name="Lloyd D.M."/>
            <person name="Martyn I.D."/>
            <person name="Mashreghi-Mohammadi M."/>
            <person name="Matthews L.H."/>
            <person name="Mccann O.T."/>
            <person name="Mcclay J."/>
            <person name="Mclaren S."/>
            <person name="McMurray A.A."/>
            <person name="Milne S.A."/>
            <person name="Mortimore B.J."/>
            <person name="Odell C.N."/>
            <person name="Pavitt R."/>
            <person name="Pearce A.V."/>
            <person name="Pearson D."/>
            <person name="Phillimore B.J.C.T."/>
            <person name="Phillips S.H."/>
            <person name="Plumb R.W."/>
            <person name="Ramsay H."/>
            <person name="Ramsey Y."/>
            <person name="Rogers L."/>
            <person name="Ross M.T."/>
            <person name="Scott C.E."/>
            <person name="Sehra H.K."/>
            <person name="Skuce C.D."/>
            <person name="Smalley S."/>
            <person name="Smith M.L."/>
            <person name="Soderlund C."/>
            <person name="Spragon L."/>
            <person name="Steward C.A."/>
            <person name="Sulston J.E."/>
            <person name="Swann R.M."/>
            <person name="Vaudin M."/>
            <person name="Wall M."/>
            <person name="Wallis J.M."/>
            <person name="Whiteley M.N."/>
            <person name="Willey D.L."/>
            <person name="Williams L."/>
            <person name="Williams S.A."/>
            <person name="Williamson H."/>
            <person name="Wilmer T.E."/>
            <person name="Wilming L."/>
            <person name="Wright C.L."/>
            <person name="Hubbard T."/>
            <person name="Bentley D.R."/>
            <person name="Beck S."/>
            <person name="Rogers J."/>
            <person name="Shimizu N."/>
            <person name="Minoshima S."/>
            <person name="Kawasaki K."/>
            <person name="Sasaki T."/>
            <person name="Asakawa S."/>
            <person name="Kudoh J."/>
            <person name="Shintani A."/>
            <person name="Shibuya K."/>
            <person name="Yoshizaki Y."/>
            <person name="Aoki N."/>
            <person name="Mitsuyama S."/>
            <person name="Roe B.A."/>
            <person name="Chen F."/>
            <person name="Chu L."/>
            <person name="Crabtree J."/>
            <person name="Deschamps S."/>
            <person name="Do A."/>
            <person name="Do T."/>
            <person name="Dorman A."/>
            <person name="Fang F."/>
            <person name="Fu Y."/>
            <person name="Hu P."/>
            <person name="Hua A."/>
            <person name="Kenton S."/>
            <person name="Lai H."/>
            <person name="Lao H.I."/>
            <person name="Lewis J."/>
            <person name="Lewis S."/>
            <person name="Lin S.-P."/>
            <person name="Loh P."/>
            <person name="Malaj E."/>
            <person name="Nguyen T."/>
            <person name="Pan H."/>
            <person name="Phan S."/>
            <person name="Qi S."/>
            <person name="Qian Y."/>
            <person name="Ray L."/>
            <person name="Ren Q."/>
            <person name="Shaull S."/>
            <person name="Sloan D."/>
            <person name="Song L."/>
            <person name="Wang Q."/>
            <person name="Wang Y."/>
            <person name="Wang Z."/>
            <person name="White J."/>
            <person name="Willingham D."/>
            <person name="Wu H."/>
            <person name="Yao Z."/>
            <person name="Zhan M."/>
            <person name="Zhang G."/>
            <person name="Chissoe S."/>
            <person name="Murray J."/>
            <person name="Miller N."/>
            <person name="Minx P."/>
            <person name="Fulton R."/>
            <person name="Johnson D."/>
            <person name="Bemis G."/>
            <person name="Bentley D."/>
            <person name="Bradshaw H."/>
            <person name="Bourne S."/>
            <person name="Cordes M."/>
            <person name="Du Z."/>
            <person name="Fulton L."/>
            <person name="Goela D."/>
            <person name="Graves T."/>
            <person name="Hawkins J."/>
            <person name="Hinds K."/>
            <person name="Kemp K."/>
            <person name="Latreille P."/>
            <person name="Layman D."/>
            <person name="Ozersky P."/>
            <person name="Rohlfing T."/>
            <person name="Scheet P."/>
            <person name="Walker C."/>
            <person name="Wamsley A."/>
            <person name="Wohldmann P."/>
            <person name="Pepin K."/>
            <person name="Nelson J."/>
            <person name="Korf I."/>
            <person name="Bedell J.A."/>
            <person name="Hillier L.W."/>
            <person name="Mardis E."/>
            <person name="Waterston R."/>
            <person name="Wilson R."/>
            <person name="Emanuel B.S."/>
            <person name="Shaikh T."/>
            <person name="Kurahashi H."/>
            <person name="Saitta S."/>
            <person name="Budarf M.L."/>
            <person name="McDermid H.E."/>
            <person name="Johnson A."/>
            <person name="Wong A.C.C."/>
            <person name="Morrow B.E."/>
            <person name="Edelmann L."/>
            <person name="Kim U.J."/>
            <person name="Shizuya H."/>
            <person name="Simon M.I."/>
            <person name="Dumanski J.P."/>
            <person name="Peyrard M."/>
            <person name="Kedra D."/>
            <person name="Seroussi E."/>
            <person name="Fransson I."/>
            <person name="Tapia I."/>
            <person name="Bruder C.E."/>
            <person name="O'Brien K.P."/>
            <person name="Wilkinson P."/>
            <person name="Bodenteich A."/>
            <person name="Hartman K."/>
            <person name="Hu X."/>
            <person name="Khan A.S."/>
            <person name="Lane L."/>
            <person name="Tilahun Y."/>
            <person name="Wright H."/>
        </authorList>
    </citation>
    <scope>NUCLEOTIDE SEQUENCE [LARGE SCALE GENOMIC DNA]</scope>
    <scope>VARIANT ARG-330</scope>
</reference>
<reference key="7">
    <citation type="submission" date="2005-07" db="EMBL/GenBank/DDBJ databases">
        <authorList>
            <person name="Mural R.J."/>
            <person name="Istrail S."/>
            <person name="Sutton G."/>
            <person name="Florea L."/>
            <person name="Halpern A.L."/>
            <person name="Mobarry C.M."/>
            <person name="Lippert R."/>
            <person name="Walenz B."/>
            <person name="Shatkay H."/>
            <person name="Dew I."/>
            <person name="Miller J.R."/>
            <person name="Flanigan M.J."/>
            <person name="Edwards N.J."/>
            <person name="Bolanos R."/>
            <person name="Fasulo D."/>
            <person name="Halldorsson B.V."/>
            <person name="Hannenhalli S."/>
            <person name="Turner R."/>
            <person name="Yooseph S."/>
            <person name="Lu F."/>
            <person name="Nusskern D.R."/>
            <person name="Shue B.C."/>
            <person name="Zheng X.H."/>
            <person name="Zhong F."/>
            <person name="Delcher A.L."/>
            <person name="Huson D.H."/>
            <person name="Kravitz S.A."/>
            <person name="Mouchard L."/>
            <person name="Reinert K."/>
            <person name="Remington K.A."/>
            <person name="Clark A.G."/>
            <person name="Waterman M.S."/>
            <person name="Eichler E.E."/>
            <person name="Adams M.D."/>
            <person name="Hunkapiller M.W."/>
            <person name="Myers E.W."/>
            <person name="Venter J.C."/>
        </authorList>
    </citation>
    <scope>NUCLEOTIDE SEQUENCE [LARGE SCALE GENOMIC DNA]</scope>
</reference>
<reference key="8">
    <citation type="journal article" date="2004" name="Genome Res.">
        <title>The status, quality, and expansion of the NIH full-length cDNA project: the Mammalian Gene Collection (MGC).</title>
        <authorList>
            <consortium name="The MGC Project Team"/>
        </authorList>
    </citation>
    <scope>NUCLEOTIDE SEQUENCE [LARGE SCALE MRNA] (ISOFORMS 1 AND 3)</scope>
    <source>
        <tissue>Brain</tissue>
        <tissue>PNS</tissue>
    </source>
</reference>
<reference key="9">
    <citation type="journal article" date="2009" name="J. Proteome Res.">
        <title>Glycoproteomics analysis of human liver tissue by combination of multiple enzyme digestion and hydrazide chemistry.</title>
        <authorList>
            <person name="Chen R."/>
            <person name="Jiang X."/>
            <person name="Sun D."/>
            <person name="Han G."/>
            <person name="Wang F."/>
            <person name="Ye M."/>
            <person name="Wang L."/>
            <person name="Zou H."/>
        </authorList>
    </citation>
    <scope>GLYCOSYLATION [LARGE SCALE ANALYSIS] AT ASN-550</scope>
    <source>
        <tissue>Liver</tissue>
    </source>
</reference>
<reference key="10">
    <citation type="journal article" date="2011" name="Anal. Biochem.">
        <title>Gamma-glutamyl compounds: substrate specificity of gamma-glutamyl transpeptidase enzymes.</title>
        <authorList>
            <person name="Wickham S."/>
            <person name="West M.B."/>
            <person name="Cook P.F."/>
            <person name="Hanigan M.H."/>
        </authorList>
    </citation>
    <scope>FUNCTION</scope>
    <scope>CATALYTIC ACTIVITY</scope>
    <scope>SUBSTRATE SPECIFICITY</scope>
    <scope>ACTIVITY REGULATION</scope>
    <scope>PATHWAY</scope>
    <scope>BIOPHYSICOCHEMICAL PROPERTIES</scope>
</reference>
<reference key="11">
    <citation type="journal article" date="2014" name="J. Proteomics">
        <title>An enzyme assisted RP-RPLC approach for in-depth analysis of human liver phosphoproteome.</title>
        <authorList>
            <person name="Bian Y."/>
            <person name="Song C."/>
            <person name="Cheng K."/>
            <person name="Dong M."/>
            <person name="Wang F."/>
            <person name="Huang J."/>
            <person name="Sun D."/>
            <person name="Wang L."/>
            <person name="Ye M."/>
            <person name="Zou H."/>
        </authorList>
    </citation>
    <scope>IDENTIFICATION BY MASS SPECTROMETRY [LARGE SCALE ANALYSIS]</scope>
    <source>
        <tissue>Liver</tissue>
    </source>
</reference>
<reference key="12">
    <citation type="journal article" date="2018" name="IUBMB Life">
        <title>The glutathione cycle: Glutathione metabolism beyond the gamma-glutamyl cycle.</title>
        <authorList>
            <person name="Bachhawat A.K."/>
            <person name="Yadav S."/>
        </authorList>
    </citation>
    <scope>REVIEW ON FUNCTION</scope>
</reference>
<reference key="13">
    <citation type="journal article" date="2019" name="Nature">
        <title>S-Geranylgeranyl-L-glutathione is a ligand for human B cell-confinement receptor P2RY8.</title>
        <authorList>
            <person name="Lu E."/>
            <person name="Wolfreys F.D."/>
            <person name="Muppidi J.R."/>
            <person name="Xu Y."/>
            <person name="Cyster J.G."/>
        </authorList>
    </citation>
    <scope>TISSUE SPECIFICITY</scope>
</reference>
<keyword id="KW-0012">Acyltransferase</keyword>
<keyword id="KW-0025">Alternative splicing</keyword>
<keyword id="KW-0317">Glutathione biosynthesis</keyword>
<keyword id="KW-0325">Glycoprotein</keyword>
<keyword id="KW-0378">Hydrolase</keyword>
<keyword id="KW-0434">Leukotriene biosynthesis</keyword>
<keyword id="KW-0472">Membrane</keyword>
<keyword id="KW-0645">Protease</keyword>
<keyword id="KW-1267">Proteomics identification</keyword>
<keyword id="KW-1185">Reference proteome</keyword>
<keyword id="KW-0735">Signal-anchor</keyword>
<keyword id="KW-0808">Transferase</keyword>
<keyword id="KW-0812">Transmembrane</keyword>
<keyword id="KW-1133">Transmembrane helix</keyword>
<keyword id="KW-0865">Zymogen</keyword>
<proteinExistence type="evidence at protein level"/>
<name>GGT5_HUMAN</name>
<evidence type="ECO:0000250" key="1">
    <source>
        <dbReference type="UniProtKB" id="P19440"/>
    </source>
</evidence>
<evidence type="ECO:0000250" key="2">
    <source>
        <dbReference type="UniProtKB" id="Q9Z2A9"/>
    </source>
</evidence>
<evidence type="ECO:0000255" key="3"/>
<evidence type="ECO:0000269" key="4">
    <source>
    </source>
</evidence>
<evidence type="ECO:0000269" key="5">
    <source>
    </source>
</evidence>
<evidence type="ECO:0000269" key="6">
    <source>
    </source>
</evidence>
<evidence type="ECO:0000269" key="7">
    <source>
    </source>
</evidence>
<evidence type="ECO:0000269" key="8">
    <source>
    </source>
</evidence>
<evidence type="ECO:0000303" key="9">
    <source>
    </source>
</evidence>
<evidence type="ECO:0000303" key="10">
    <source>
    </source>
</evidence>
<evidence type="ECO:0000303" key="11">
    <source>
    </source>
</evidence>
<evidence type="ECO:0000303" key="12">
    <source>
    </source>
</evidence>
<evidence type="ECO:0000305" key="13"/>
<evidence type="ECO:0000305" key="14">
    <source>
    </source>
</evidence>
<comment type="function">
    <text evidence="2 5 7 12">Cleaves the gamma-glutamyl bond of extracellular glutathione tripeptide (gamma-Glu-Cys-Gly) and certain glutathione conjugates (PubMed:1676842, PubMed:21447318). Hydrolyzes glutathione releasing L-Glu and Cys-Gly dipeptide which is further metabolized to maintain extracellular cysteine levels but also to provide cysteine necessary for intracellular glutathione synthesis (PubMed:1676842, PubMed:21447318). Among glutathione-S-conjugates metabolizes leukotriene C4 (LTC4) and S-geranylgeranyl-glutathione (GGG), but is inactive toward gamma-glutamyl leucine. Converts extracellular LTC4 to LTD4 during acute inflammatory response. Acts as a negative regulator of GGG bioactivity. GGT5 (via GGG catabolism) and ABCC1 (via extracellular transport) establish GGG gradients within lymphoid tissues to position P2RY8-positive lymphocytes at germinal centers in lymphoid follicles and restrict their chemotactic transmigration from blood vessels to bone marrow parenchyma (By similarity). The transpeptidation reaction, i.e. the transfer of gamma-glutamyl moiety to an acceptor molecule to yield a new gamma-glutamyl compound requires high concentration of dipeptide acceptor and is considered nonphysiological (PubMed:21447318, PubMed:29667297).</text>
</comment>
<comment type="catalytic activity">
    <reaction evidence="5 7">
        <text>glutathione + H2O = L-cysteinylglycine + L-glutamate</text>
        <dbReference type="Rhea" id="RHEA:28807"/>
        <dbReference type="ChEBI" id="CHEBI:15377"/>
        <dbReference type="ChEBI" id="CHEBI:29985"/>
        <dbReference type="ChEBI" id="CHEBI:57925"/>
        <dbReference type="ChEBI" id="CHEBI:61694"/>
        <dbReference type="EC" id="3.4.19.13"/>
    </reaction>
    <physiologicalReaction direction="left-to-right" evidence="13">
        <dbReference type="Rhea" id="RHEA:28808"/>
    </physiologicalReaction>
</comment>
<comment type="catalytic activity">
    <reaction evidence="7 8">
        <text>an S-substituted glutathione + H2O = an S-substituted L-cysteinylglycine + L-glutamate</text>
        <dbReference type="Rhea" id="RHEA:59468"/>
        <dbReference type="ChEBI" id="CHEBI:15377"/>
        <dbReference type="ChEBI" id="CHEBI:29985"/>
        <dbReference type="ChEBI" id="CHEBI:90779"/>
        <dbReference type="ChEBI" id="CHEBI:143103"/>
        <dbReference type="EC" id="3.4.19.13"/>
    </reaction>
    <physiologicalReaction direction="left-to-right" evidence="13">
        <dbReference type="Rhea" id="RHEA:59469"/>
    </physiologicalReaction>
</comment>
<comment type="catalytic activity">
    <reaction evidence="7">
        <text>leukotriene C4 + H2O = leukotriene D4 + L-glutamate</text>
        <dbReference type="Rhea" id="RHEA:31563"/>
        <dbReference type="ChEBI" id="CHEBI:15377"/>
        <dbReference type="ChEBI" id="CHEBI:29985"/>
        <dbReference type="ChEBI" id="CHEBI:57973"/>
        <dbReference type="ChEBI" id="CHEBI:63166"/>
        <dbReference type="EC" id="3.4.19.14"/>
    </reaction>
    <physiologicalReaction direction="left-to-right" evidence="14">
        <dbReference type="Rhea" id="RHEA:31564"/>
    </physiologicalReaction>
</comment>
<comment type="catalytic activity">
    <reaction evidence="2">
        <text>S-[(2E,6E,10E)-geranylgeranyl]-L-glutathione + H2O = S-[(2E,6E,10E)-geranylgeranyl]-L-cysteinylglycine + L-glutamate</text>
        <dbReference type="Rhea" id="RHEA:65120"/>
        <dbReference type="ChEBI" id="CHEBI:15377"/>
        <dbReference type="ChEBI" id="CHEBI:29985"/>
        <dbReference type="ChEBI" id="CHEBI:156326"/>
        <dbReference type="ChEBI" id="CHEBI:156330"/>
    </reaction>
    <physiologicalReaction direction="left-to-right" evidence="2">
        <dbReference type="Rhea" id="RHEA:65121"/>
    </physiologicalReaction>
</comment>
<comment type="catalytic activity">
    <reaction evidence="14">
        <text>an N-terminal (5-L-glutamyl)-[peptide] + an alpha-amino acid = 5-L-glutamyl amino acid + an N-terminal L-alpha-aminoacyl-[peptide]</text>
        <dbReference type="Rhea" id="RHEA:23904"/>
        <dbReference type="Rhea" id="RHEA-COMP:9780"/>
        <dbReference type="Rhea" id="RHEA-COMP:9795"/>
        <dbReference type="ChEBI" id="CHEBI:77644"/>
        <dbReference type="ChEBI" id="CHEBI:78597"/>
        <dbReference type="ChEBI" id="CHEBI:78599"/>
        <dbReference type="ChEBI" id="CHEBI:78608"/>
        <dbReference type="EC" id="2.3.2.2"/>
    </reaction>
    <physiologicalReaction direction="left-to-right" evidence="14">
        <dbReference type="Rhea" id="RHEA:23905"/>
    </physiologicalReaction>
</comment>
<comment type="activity regulation">
    <text evidence="7">Inhibited by serine-borate.</text>
</comment>
<comment type="biophysicochemical properties">
    <kinetics>
        <KM evidence="7">10.5 uM for glutathione</KM>
        <KM evidence="7">10.2 uM for leukotriene C4</KM>
        <KM evidence="7">18.2 uM for S-methylglutathione</KM>
        <KM evidence="7">14.8 uM for S-(4-nitro-benzyl)glutathione</KM>
        <KM evidence="7">43 uM for oxidized glutathione</KM>
    </kinetics>
</comment>
<comment type="pathway">
    <text evidence="7">Sulfur metabolism; glutathione metabolism.</text>
</comment>
<comment type="pathway">
    <text evidence="7">Lipid metabolism; leukotriene D4 biosynthesis.</text>
</comment>
<comment type="subunit">
    <text evidence="2">Heterodimer composed of the light and heavy chains. The active site is located in the light chain.</text>
</comment>
<comment type="subcellular location">
    <subcellularLocation>
        <location evidence="2">Membrane</location>
        <topology evidence="2">Single-pass type II membrane protein</topology>
    </subcellularLocation>
</comment>
<comment type="alternative products">
    <event type="alternative splicing"/>
    <isoform>
        <id>P36269-1</id>
        <name>1</name>
        <sequence type="displayed"/>
    </isoform>
    <isoform>
        <id>P36269-2</id>
        <name>2</name>
        <sequence type="described" ref="VSP_008146"/>
    </isoform>
    <isoform>
        <id>P36269-3</id>
        <name>3</name>
        <sequence type="described" ref="VSP_043470"/>
    </isoform>
</comment>
<comment type="tissue specificity">
    <text evidence="8">Expressed in follicular dendritic cells in lymphoid follicles (at protein level).</text>
</comment>
<comment type="PTM">
    <text evidence="1">Cleaved by autocatalysis into a large and a small subunit.</text>
</comment>
<comment type="PTM">
    <text evidence="2">Glycosylated.</text>
</comment>
<comment type="miscellaneous">
    <text evidence="2 5 7">A previous study reported that GSH and oxidized glutathione (GSSG) are not substrates for murine GGT5 (By similarity). However, this result contrasts with two studies reported that GSH is indeed a substrate for GGT5 (PubMed:1676842, PubMed:21447318).</text>
</comment>
<comment type="similarity">
    <text evidence="13">Belongs to the gamma-glutamyltransferase family.</text>
</comment>
<comment type="sequence caution" evidence="13">
    <conflict type="frameshift">
        <sequence resource="EMBL-CDS" id="CAB55910"/>
    </conflict>
</comment>
<gene>
    <name type="primary">GGT5</name>
    <name type="synonym">GGTLA1</name>
</gene>